<feature type="chain" id="PRO_0000144435" description="ATP synthase subunit beta">
    <location>
        <begin position="1"/>
        <end position="483"/>
    </location>
</feature>
<feature type="binding site" evidence="1">
    <location>
        <begin position="169"/>
        <end position="176"/>
    </location>
    <ligand>
        <name>ATP</name>
        <dbReference type="ChEBI" id="CHEBI:30616"/>
    </ligand>
</feature>
<feature type="sequence conflict" description="In Ref. 1; CAA54202, 2; BAB13360, 3; BAB08157 and 5; CAF19916." evidence="2" ref="1 2 3 5">
    <original>D</original>
    <variation>E</variation>
    <location>
        <position position="461"/>
    </location>
</feature>
<accession>P42464</accession>
<evidence type="ECO:0000255" key="1">
    <source>
        <dbReference type="HAMAP-Rule" id="MF_01347"/>
    </source>
</evidence>
<evidence type="ECO:0000305" key="2"/>
<gene>
    <name evidence="1" type="primary">atpD</name>
    <name type="ordered locus">Cgl1212</name>
    <name type="ordered locus">cg1368</name>
</gene>
<organism>
    <name type="scientific">Corynebacterium glutamicum (strain ATCC 13032 / DSM 20300 / JCM 1318 / BCRC 11384 / CCUG 27702 / LMG 3730 / NBRC 12168 / NCIMB 10025 / NRRL B-2784 / 534)</name>
    <dbReference type="NCBI Taxonomy" id="196627"/>
    <lineage>
        <taxon>Bacteria</taxon>
        <taxon>Bacillati</taxon>
        <taxon>Actinomycetota</taxon>
        <taxon>Actinomycetes</taxon>
        <taxon>Mycobacteriales</taxon>
        <taxon>Corynebacteriaceae</taxon>
        <taxon>Corynebacterium</taxon>
    </lineage>
</organism>
<sequence length="483" mass="52538">MTTALEEQNAQQAATAGRVVRVIGAVVDVEFPRGELPALYNALTVEVTLESVKKTVVLEVAQHLGDNLIRTIAMAPTDGLVRGAAVTDTARPISVPVGDVVKGHVFNALGDCLDDVSLNNNPEIERWGIHREPPSFDQLEGKTEILETGIKVIDLLTPYVKGGKIGLFGGAGVGKTVLIQEMITRIAREFSGTSVFAGVGERTREGTDLFLEMEEMGVLQDTALVFGQMDEPPGVRMRVALSGLTMAEYFRDVQNQDVLLFIDNIFRFTQAGSEVSTLLGRMPSAVGYQPTLADEMGVLQERITSTKGRSITSLQAVYVPADDYTDPAPATTFAHLDATTELDRSIASKGIYPAVNPLTSTSRILEPAIVGERHYEVSQRVIGILQKNKELQDIIAILGMDELSEEDKITVARARRIERFLGQNFFVAEKFTGLPGSYVPLTDTVDAFERICNGDFDHYPDQAFNGLGGLDDVEAAYKKLTGK</sequence>
<protein>
    <recommendedName>
        <fullName evidence="1">ATP synthase subunit beta</fullName>
        <ecNumber evidence="1">7.1.2.2</ecNumber>
    </recommendedName>
    <alternativeName>
        <fullName evidence="1">ATP synthase F1 sector subunit beta</fullName>
    </alternativeName>
    <alternativeName>
        <fullName evidence="1">F-ATPase subunit beta</fullName>
    </alternativeName>
</protein>
<name>ATPB_CORGL</name>
<keyword id="KW-0066">ATP synthesis</keyword>
<keyword id="KW-0067">ATP-binding</keyword>
<keyword id="KW-1003">Cell membrane</keyword>
<keyword id="KW-0139">CF(1)</keyword>
<keyword id="KW-0375">Hydrogen ion transport</keyword>
<keyword id="KW-0406">Ion transport</keyword>
<keyword id="KW-0472">Membrane</keyword>
<keyword id="KW-0547">Nucleotide-binding</keyword>
<keyword id="KW-1185">Reference proteome</keyword>
<keyword id="KW-1278">Translocase</keyword>
<keyword id="KW-0813">Transport</keyword>
<proteinExistence type="inferred from homology"/>
<reference key="1">
    <citation type="journal article" date="1993" name="Antonie Van Leeuwenhoek">
        <title>Phylogenetic relationships of Bacteria based on comparative sequence analysis of elongation factor Tu and ATP-synthase beta-subunit genes.</title>
        <authorList>
            <person name="Ludwig W."/>
            <person name="Neumaier J."/>
            <person name="Klugbauer N."/>
            <person name="Brockmann E."/>
            <person name="Roller C."/>
            <person name="Klugbauer S."/>
            <person name="Reetz K."/>
            <person name="Schachtner I."/>
            <person name="Ludvigsen A."/>
            <person name="Bachleitner M."/>
            <person name="Fischer U."/>
            <person name="Schleifer K.H."/>
        </authorList>
    </citation>
    <scope>NUCLEOTIDE SEQUENCE [GENOMIC DNA]</scope>
    <source>
        <strain>ATCC 13059 / LMG 3658 / NCIB 10332 / AS019 / 613</strain>
    </source>
</reference>
<reference key="2">
    <citation type="submission" date="2000-09" db="EMBL/GenBank/DDBJ databases">
        <title>Nucleotide sequence of atp operon of Brevibacterium flavum.</title>
        <authorList>
            <person name="Sekine H."/>
            <person name="Tomita F."/>
            <person name="Yokota A."/>
        </authorList>
    </citation>
    <scope>NUCLEOTIDE SEQUENCE [GENOMIC DNA]</scope>
    <source>
        <strain>ATCC 14067 / DSM 20411 / NCIB 9565 / 2247</strain>
    </source>
</reference>
<reference key="3">
    <citation type="submission" date="2000-07" db="EMBL/GenBank/DDBJ databases">
        <title>Nucleotide sequence of atp operon of Corynebacterium glutamicum.</title>
        <authorList>
            <person name="Sekine H."/>
            <person name="Yokota A."/>
            <person name="Tomita F."/>
        </authorList>
    </citation>
    <scope>NUCLEOTIDE SEQUENCE [GENOMIC DNA]</scope>
    <source>
        <strain>ATCC 13060 / LMG 3653 / NCIB 10333 / 614</strain>
    </source>
</reference>
<reference key="4">
    <citation type="journal article" date="2003" name="Appl. Microbiol. Biotechnol.">
        <title>The Corynebacterium glutamicum genome: features and impacts on biotechnological processes.</title>
        <authorList>
            <person name="Ikeda M."/>
            <person name="Nakagawa S."/>
        </authorList>
    </citation>
    <scope>NUCLEOTIDE SEQUENCE [LARGE SCALE GENOMIC DNA]</scope>
    <source>
        <strain>ATCC 13032 / DSM 20300 / JCM 1318 / BCRC 11384 / CCUG 27702 / LMG 3730 / NBRC 12168 / NCIMB 10025 / NRRL B-2784 / 534</strain>
    </source>
</reference>
<reference key="5">
    <citation type="journal article" date="2003" name="J. Biotechnol.">
        <title>The complete Corynebacterium glutamicum ATCC 13032 genome sequence and its impact on the production of L-aspartate-derived amino acids and vitamins.</title>
        <authorList>
            <person name="Kalinowski J."/>
            <person name="Bathe B."/>
            <person name="Bartels D."/>
            <person name="Bischoff N."/>
            <person name="Bott M."/>
            <person name="Burkovski A."/>
            <person name="Dusch N."/>
            <person name="Eggeling L."/>
            <person name="Eikmanns B.J."/>
            <person name="Gaigalat L."/>
            <person name="Goesmann A."/>
            <person name="Hartmann M."/>
            <person name="Huthmacher K."/>
            <person name="Kraemer R."/>
            <person name="Linke B."/>
            <person name="McHardy A.C."/>
            <person name="Meyer F."/>
            <person name="Moeckel B."/>
            <person name="Pfefferle W."/>
            <person name="Puehler A."/>
            <person name="Rey D.A."/>
            <person name="Rueckert C."/>
            <person name="Rupp O."/>
            <person name="Sahm H."/>
            <person name="Wendisch V.F."/>
            <person name="Wiegraebe I."/>
            <person name="Tauch A."/>
        </authorList>
    </citation>
    <scope>NUCLEOTIDE SEQUENCE [LARGE SCALE GENOMIC DNA]</scope>
    <source>
        <strain>ATCC 13032 / DSM 20300 / JCM 1318 / BCRC 11384 / CCUG 27702 / LMG 3730 / NBRC 12168 / NCIMB 10025 / NRRL B-2784 / 534</strain>
    </source>
</reference>
<dbReference type="EC" id="7.1.2.2" evidence="1"/>
<dbReference type="EMBL" id="X76875">
    <property type="protein sequence ID" value="CAA54202.1"/>
    <property type="molecule type" value="Genomic_DNA"/>
</dbReference>
<dbReference type="EMBL" id="AB048368">
    <property type="protein sequence ID" value="BAB13360.1"/>
    <property type="molecule type" value="Genomic_DNA"/>
</dbReference>
<dbReference type="EMBL" id="AB046112">
    <property type="protein sequence ID" value="BAB08157.1"/>
    <property type="molecule type" value="Genomic_DNA"/>
</dbReference>
<dbReference type="EMBL" id="BA000036">
    <property type="protein sequence ID" value="BAB98605.1"/>
    <property type="molecule type" value="Genomic_DNA"/>
</dbReference>
<dbReference type="EMBL" id="BX927151">
    <property type="protein sequence ID" value="CAF19916.1"/>
    <property type="molecule type" value="Genomic_DNA"/>
</dbReference>
<dbReference type="PIR" id="I40716">
    <property type="entry name" value="I40716"/>
</dbReference>
<dbReference type="RefSeq" id="NP_600437.1">
    <property type="nucleotide sequence ID" value="NC_003450.3"/>
</dbReference>
<dbReference type="RefSeq" id="WP_011014204.1">
    <property type="nucleotide sequence ID" value="NC_003450.3"/>
</dbReference>
<dbReference type="SMR" id="P42464"/>
<dbReference type="STRING" id="196627.cg1368"/>
<dbReference type="GeneID" id="1019195"/>
<dbReference type="KEGG" id="cgb:cg1368"/>
<dbReference type="KEGG" id="cgl:Cgl1212"/>
<dbReference type="PATRIC" id="fig|196627.13.peg.1191"/>
<dbReference type="eggNOG" id="COG0055">
    <property type="taxonomic scope" value="Bacteria"/>
</dbReference>
<dbReference type="HOGENOM" id="CLU_022398_0_2_11"/>
<dbReference type="OrthoDB" id="9801639at2"/>
<dbReference type="BioCyc" id="CORYNE:G18NG-10785-MONOMER"/>
<dbReference type="Proteomes" id="UP000000582">
    <property type="component" value="Chromosome"/>
</dbReference>
<dbReference type="Proteomes" id="UP000001009">
    <property type="component" value="Chromosome"/>
</dbReference>
<dbReference type="GO" id="GO:0005886">
    <property type="term" value="C:plasma membrane"/>
    <property type="evidence" value="ECO:0007669"/>
    <property type="project" value="UniProtKB-SubCell"/>
</dbReference>
<dbReference type="GO" id="GO:0045259">
    <property type="term" value="C:proton-transporting ATP synthase complex"/>
    <property type="evidence" value="ECO:0007669"/>
    <property type="project" value="UniProtKB-KW"/>
</dbReference>
<dbReference type="GO" id="GO:0005524">
    <property type="term" value="F:ATP binding"/>
    <property type="evidence" value="ECO:0007669"/>
    <property type="project" value="UniProtKB-UniRule"/>
</dbReference>
<dbReference type="GO" id="GO:0016887">
    <property type="term" value="F:ATP hydrolysis activity"/>
    <property type="evidence" value="ECO:0007669"/>
    <property type="project" value="InterPro"/>
</dbReference>
<dbReference type="GO" id="GO:0046933">
    <property type="term" value="F:proton-transporting ATP synthase activity, rotational mechanism"/>
    <property type="evidence" value="ECO:0007669"/>
    <property type="project" value="UniProtKB-UniRule"/>
</dbReference>
<dbReference type="CDD" id="cd18110">
    <property type="entry name" value="ATP-synt_F1_beta_C"/>
    <property type="match status" value="1"/>
</dbReference>
<dbReference type="CDD" id="cd18115">
    <property type="entry name" value="ATP-synt_F1_beta_N"/>
    <property type="match status" value="1"/>
</dbReference>
<dbReference type="CDD" id="cd01133">
    <property type="entry name" value="F1-ATPase_beta_CD"/>
    <property type="match status" value="1"/>
</dbReference>
<dbReference type="FunFam" id="1.10.1140.10:FF:000005">
    <property type="entry name" value="ATP synthase subunit beta"/>
    <property type="match status" value="1"/>
</dbReference>
<dbReference type="FunFam" id="2.40.10.170:FF:000005">
    <property type="entry name" value="ATP synthase subunit beta"/>
    <property type="match status" value="1"/>
</dbReference>
<dbReference type="FunFam" id="3.40.50.300:FF:000004">
    <property type="entry name" value="ATP synthase subunit beta"/>
    <property type="match status" value="1"/>
</dbReference>
<dbReference type="Gene3D" id="2.40.10.170">
    <property type="match status" value="1"/>
</dbReference>
<dbReference type="Gene3D" id="1.10.1140.10">
    <property type="entry name" value="Bovine Mitochondrial F1-atpase, Atp Synthase Beta Chain, Chain D, domain 3"/>
    <property type="match status" value="1"/>
</dbReference>
<dbReference type="Gene3D" id="3.40.50.300">
    <property type="entry name" value="P-loop containing nucleotide triphosphate hydrolases"/>
    <property type="match status" value="1"/>
</dbReference>
<dbReference type="HAMAP" id="MF_01347">
    <property type="entry name" value="ATP_synth_beta_bact"/>
    <property type="match status" value="1"/>
</dbReference>
<dbReference type="InterPro" id="IPR003593">
    <property type="entry name" value="AAA+_ATPase"/>
</dbReference>
<dbReference type="InterPro" id="IPR055190">
    <property type="entry name" value="ATP-synt_VA_C"/>
</dbReference>
<dbReference type="InterPro" id="IPR005722">
    <property type="entry name" value="ATP_synth_F1_bsu"/>
</dbReference>
<dbReference type="InterPro" id="IPR020003">
    <property type="entry name" value="ATPase_a/bsu_AS"/>
</dbReference>
<dbReference type="InterPro" id="IPR050053">
    <property type="entry name" value="ATPase_alpha/beta_chains"/>
</dbReference>
<dbReference type="InterPro" id="IPR004100">
    <property type="entry name" value="ATPase_F1/V1/A1_a/bsu_N"/>
</dbReference>
<dbReference type="InterPro" id="IPR036121">
    <property type="entry name" value="ATPase_F1/V1/A1_a/bsu_N_sf"/>
</dbReference>
<dbReference type="InterPro" id="IPR000194">
    <property type="entry name" value="ATPase_F1/V1/A1_a/bsu_nucl-bd"/>
</dbReference>
<dbReference type="InterPro" id="IPR024034">
    <property type="entry name" value="ATPase_F1/V1_b/a_C"/>
</dbReference>
<dbReference type="InterPro" id="IPR027417">
    <property type="entry name" value="P-loop_NTPase"/>
</dbReference>
<dbReference type="NCBIfam" id="TIGR01039">
    <property type="entry name" value="atpD"/>
    <property type="match status" value="1"/>
</dbReference>
<dbReference type="PANTHER" id="PTHR15184">
    <property type="entry name" value="ATP SYNTHASE"/>
    <property type="match status" value="1"/>
</dbReference>
<dbReference type="PANTHER" id="PTHR15184:SF71">
    <property type="entry name" value="ATP SYNTHASE SUBUNIT BETA, MITOCHONDRIAL"/>
    <property type="match status" value="1"/>
</dbReference>
<dbReference type="Pfam" id="PF00006">
    <property type="entry name" value="ATP-synt_ab"/>
    <property type="match status" value="1"/>
</dbReference>
<dbReference type="Pfam" id="PF02874">
    <property type="entry name" value="ATP-synt_ab_N"/>
    <property type="match status" value="1"/>
</dbReference>
<dbReference type="Pfam" id="PF22919">
    <property type="entry name" value="ATP-synt_VA_C"/>
    <property type="match status" value="1"/>
</dbReference>
<dbReference type="SMART" id="SM00382">
    <property type="entry name" value="AAA"/>
    <property type="match status" value="1"/>
</dbReference>
<dbReference type="SUPFAM" id="SSF47917">
    <property type="entry name" value="C-terminal domain of alpha and beta subunits of F1 ATP synthase"/>
    <property type="match status" value="1"/>
</dbReference>
<dbReference type="SUPFAM" id="SSF50615">
    <property type="entry name" value="N-terminal domain of alpha and beta subunits of F1 ATP synthase"/>
    <property type="match status" value="1"/>
</dbReference>
<dbReference type="SUPFAM" id="SSF52540">
    <property type="entry name" value="P-loop containing nucleoside triphosphate hydrolases"/>
    <property type="match status" value="1"/>
</dbReference>
<dbReference type="PROSITE" id="PS00152">
    <property type="entry name" value="ATPASE_ALPHA_BETA"/>
    <property type="match status" value="1"/>
</dbReference>
<comment type="function">
    <text evidence="1">Produces ATP from ADP in the presence of a proton gradient across the membrane. The catalytic sites are hosted primarily by the beta subunits.</text>
</comment>
<comment type="catalytic activity">
    <reaction evidence="1">
        <text>ATP + H2O + 4 H(+)(in) = ADP + phosphate + 5 H(+)(out)</text>
        <dbReference type="Rhea" id="RHEA:57720"/>
        <dbReference type="ChEBI" id="CHEBI:15377"/>
        <dbReference type="ChEBI" id="CHEBI:15378"/>
        <dbReference type="ChEBI" id="CHEBI:30616"/>
        <dbReference type="ChEBI" id="CHEBI:43474"/>
        <dbReference type="ChEBI" id="CHEBI:456216"/>
        <dbReference type="EC" id="7.1.2.2"/>
    </reaction>
</comment>
<comment type="subunit">
    <text evidence="1">F-type ATPases have 2 components, CF(1) - the catalytic core - and CF(0) - the membrane proton channel. CF(1) has five subunits: alpha(3), beta(3), gamma(1), delta(1), epsilon(1). CF(0) has three main subunits: a(1), b(2) and c(9-12). The alpha and beta chains form an alternating ring which encloses part of the gamma chain. CF(1) is attached to CF(0) by a central stalk formed by the gamma and epsilon chains, while a peripheral stalk is formed by the delta and b chains.</text>
</comment>
<comment type="subcellular location">
    <subcellularLocation>
        <location evidence="1">Cell membrane</location>
        <topology evidence="1">Peripheral membrane protein</topology>
    </subcellularLocation>
</comment>
<comment type="similarity">
    <text evidence="1">Belongs to the ATPase alpha/beta chains family.</text>
</comment>